<name>CLP1_HERIL</name>
<evidence type="ECO:0000269" key="1">
    <source ref="1"/>
</evidence>
<evidence type="ECO:0000303" key="2">
    <source ref="1"/>
</evidence>
<evidence type="ECO:0000305" key="3"/>
<evidence type="ECO:0000305" key="4">
    <source ref="1"/>
</evidence>
<evidence type="ECO:0000312" key="5">
    <source>
        <dbReference type="EMBL" id="AGC65588.1"/>
    </source>
</evidence>
<sequence length="69" mass="7373">MNFTKLFVVFAVVLVAFAGQSEAGWRKRVFKPVEKFGQRVRDAGVQGIAIAQQGANVLATARGGPPQQG</sequence>
<proteinExistence type="evidence at protein level"/>
<organism evidence="5">
    <name type="scientific">Hermetia illucens</name>
    <name type="common">Black soldier fly</name>
    <dbReference type="NCBI Taxonomy" id="343691"/>
    <lineage>
        <taxon>Eukaryota</taxon>
        <taxon>Metazoa</taxon>
        <taxon>Ecdysozoa</taxon>
        <taxon>Arthropoda</taxon>
        <taxon>Hexapoda</taxon>
        <taxon>Insecta</taxon>
        <taxon>Pterygota</taxon>
        <taxon>Neoptera</taxon>
        <taxon>Endopterygota</taxon>
        <taxon>Diptera</taxon>
        <taxon>Brachycera</taxon>
        <taxon>Stratiomyomorpha</taxon>
        <taxon>Stratiomyidae</taxon>
        <taxon>Hermetiinae</taxon>
        <taxon>Hermetia</taxon>
    </lineage>
</organism>
<accession>L7VIN3</accession>
<reference evidence="3" key="1">
    <citation type="journal article" date="2017" name="Entomol. Res.">
        <title>A novel cecropin-like peptide from black soldier fly, Hermetia illucens: Isolation, structural and functional characterization.</title>
        <authorList>
            <person name="Park S.-I."/>
            <person name="Yoe S.M."/>
        </authorList>
    </citation>
    <scope>NUCLEOTIDE SEQUENCE [MRNA]</scope>
    <scope>PROTEIN SEQUENCE OF 24-40</scope>
    <scope>FUNCTION</scope>
    <scope>SUBCELLULAR LOCATION</scope>
    <scope>TISSUE SPECIFICITY</scope>
    <scope>INDUCTION</scope>
    <scope>MASS SPECTROMETRY</scope>
    <scope>AMIDATION AT GLN-68</scope>
    <source>
        <tissue evidence="2">Fat body</tissue>
        <tissue evidence="2">Hemolymph</tissue>
    </source>
</reference>
<dbReference type="EMBL" id="JX997953">
    <property type="protein sequence ID" value="AGC65588.1"/>
    <property type="molecule type" value="mRNA"/>
</dbReference>
<dbReference type="SMR" id="L7VIN3"/>
<dbReference type="OrthoDB" id="7410372at2759"/>
<dbReference type="GO" id="GO:0005576">
    <property type="term" value="C:extracellular region"/>
    <property type="evidence" value="ECO:0000314"/>
    <property type="project" value="UniProtKB"/>
</dbReference>
<dbReference type="GO" id="GO:0005615">
    <property type="term" value="C:extracellular space"/>
    <property type="evidence" value="ECO:0007669"/>
    <property type="project" value="TreeGrafter"/>
</dbReference>
<dbReference type="GO" id="GO:0019731">
    <property type="term" value="P:antibacterial humoral response"/>
    <property type="evidence" value="ECO:0007669"/>
    <property type="project" value="InterPro"/>
</dbReference>
<dbReference type="GO" id="GO:0050829">
    <property type="term" value="P:defense response to Gram-negative bacterium"/>
    <property type="evidence" value="ECO:0000314"/>
    <property type="project" value="UniProtKB"/>
</dbReference>
<dbReference type="GO" id="GO:0045087">
    <property type="term" value="P:innate immune response"/>
    <property type="evidence" value="ECO:0007669"/>
    <property type="project" value="UniProtKB-KW"/>
</dbReference>
<dbReference type="InterPro" id="IPR020400">
    <property type="entry name" value="Cecropin_insect"/>
</dbReference>
<dbReference type="PANTHER" id="PTHR38329">
    <property type="entry name" value="CECROPIN-A1-RELATED"/>
    <property type="match status" value="1"/>
</dbReference>
<dbReference type="PANTHER" id="PTHR38329:SF1">
    <property type="entry name" value="CECROPIN-A1-RELATED"/>
    <property type="match status" value="1"/>
</dbReference>
<protein>
    <recommendedName>
        <fullName evidence="2">Cecropin-like peptide 1</fullName>
        <shortName evidence="2">CLP1</shortName>
    </recommendedName>
</protein>
<keyword id="KW-0027">Amidation</keyword>
<keyword id="KW-0044">Antibiotic</keyword>
<keyword id="KW-0929">Antimicrobial</keyword>
<keyword id="KW-0903">Direct protein sequencing</keyword>
<keyword id="KW-0391">Immunity</keyword>
<keyword id="KW-0399">Innate immunity</keyword>
<keyword id="KW-0964">Secreted</keyword>
<keyword id="KW-0732">Signal</keyword>
<comment type="function">
    <text evidence="1">Antimicrobial peptide active against Gram-negative bacteria E.coli KCCM 11234 (MIC&lt;=1.03 uM), E.aerogenes KCCM 12177 (MIC&lt;=2.07 uM) and P.aeruginosa KCCM 11328 (MIC&lt;=2.07 uM). Not active against various Gram-positive bacteria at concentrations up to 4.14 uM.</text>
</comment>
<comment type="subcellular location">
    <subcellularLocation>
        <location evidence="1">Secreted</location>
    </subcellularLocation>
</comment>
<comment type="tissue specificity">
    <text evidence="1">Following bacterial infection, expressed in fat body, trachea and muscle.</text>
</comment>
<comment type="induction">
    <text evidence="1">By bacterial infection.</text>
</comment>
<comment type="mass spectrometry" mass="4840.0" method="MALDI" evidence="1"/>
<comment type="similarity">
    <text evidence="3">Belongs to the cecropin family.</text>
</comment>
<feature type="signal peptide" evidence="1">
    <location>
        <begin position="1"/>
        <end position="23"/>
    </location>
</feature>
<feature type="chain" id="PRO_0000441216" description="Cecropin-like peptide 1" evidence="4">
    <location>
        <begin position="24"/>
        <end position="68"/>
    </location>
</feature>
<feature type="modified residue" description="Glutamine amide" evidence="2">
    <location>
        <position position="68"/>
    </location>
</feature>